<proteinExistence type="evidence at protein level"/>
<sequence>MGRGKIVIRRIDNSTSRQVTFSKRRSGLLKKAKELSILCDAEVGVIIFSSTGKLYDYASNSSMKTIIERYNRVKEEQHQLLNHASEIKFWQREVASLQQQLQYLQECHRKLVGEELSGMNANDLQNLEDQLVTSLKGVRLKKDQLMTNEIRELNRKGQIIQKENHELQNIVDIMRKENIKLQKKVHGRTNAIEGNSSVDPISNGTTTYAPPQLQLIQLQPAPREKSIRLGLQLS</sequence>
<accession>Q9SI38</accession>
<accession>O49351</accession>
<gene>
    <name type="primary">ANR1</name>
    <name type="synonym">AGL44</name>
    <name type="ordered locus">At2g14210</name>
    <name type="ORF">F15N24.5</name>
</gene>
<name>ANR1_ARATH</name>
<feature type="chain" id="PRO_0000403962" description="MADS-box transcription factor ANR1">
    <location>
        <begin position="1"/>
        <end position="234"/>
    </location>
</feature>
<feature type="domain" description="MADS-box" evidence="1">
    <location>
        <begin position="1"/>
        <end position="61"/>
    </location>
</feature>
<feature type="domain" description="K-box" evidence="2">
    <location>
        <begin position="87"/>
        <end position="177"/>
    </location>
</feature>
<feature type="sequence conflict" description="In Ref. 1; CAB09793." evidence="9" ref="1">
    <original>Y</original>
    <variation>H</variation>
    <location>
        <position position="103"/>
    </location>
</feature>
<feature type="sequence conflict" description="In Ref. 1; CAB09793." evidence="9" ref="1">
    <original>A</original>
    <variation>V</variation>
    <location>
        <position position="191"/>
    </location>
</feature>
<protein>
    <recommendedName>
        <fullName>MADS-box transcription factor ANR1</fullName>
    </recommendedName>
    <alternativeName>
        <fullName>Protein AGAMOUS-LIKE 44</fullName>
    </alternativeName>
    <alternativeName>
        <fullName>Protein ARABIDOPSIS NITRATE REGULATED 1</fullName>
    </alternativeName>
</protein>
<keyword id="KW-0217">Developmental protein</keyword>
<keyword id="KW-0238">DNA-binding</keyword>
<keyword id="KW-0539">Nucleus</keyword>
<keyword id="KW-1185">Reference proteome</keyword>
<keyword id="KW-0804">Transcription</keyword>
<keyword id="KW-0805">Transcription regulation</keyword>
<reference key="1">
    <citation type="journal article" date="1998" name="Science">
        <title>An Arabidopsis MADS box gene that controls nutrient-induced changes in root architecture.</title>
        <authorList>
            <person name="Zhang H."/>
            <person name="Forde B.G."/>
        </authorList>
    </citation>
    <scope>NUCLEOTIDE SEQUENCE [MRNA]</scope>
    <scope>FUNCTION</scope>
    <scope>INDUCTION BY NITRATE</scope>
    <scope>DISRUPTION PHENOTYPE</scope>
    <scope>TISSUE SPECIFICITY</scope>
    <source>
        <strain>cv. C24</strain>
        <strain>cv. Landsberg erecta</strain>
    </source>
</reference>
<reference key="2">
    <citation type="journal article" date="1999" name="Nature">
        <title>Sequence and analysis of chromosome 2 of the plant Arabidopsis thaliana.</title>
        <authorList>
            <person name="Lin X."/>
            <person name="Kaul S."/>
            <person name="Rounsley S.D."/>
            <person name="Shea T.P."/>
            <person name="Benito M.-I."/>
            <person name="Town C.D."/>
            <person name="Fujii C.Y."/>
            <person name="Mason T.M."/>
            <person name="Bowman C.L."/>
            <person name="Barnstead M.E."/>
            <person name="Feldblyum T.V."/>
            <person name="Buell C.R."/>
            <person name="Ketchum K.A."/>
            <person name="Lee J.J."/>
            <person name="Ronning C.M."/>
            <person name="Koo H.L."/>
            <person name="Moffat K.S."/>
            <person name="Cronin L.A."/>
            <person name="Shen M."/>
            <person name="Pai G."/>
            <person name="Van Aken S."/>
            <person name="Umayam L."/>
            <person name="Tallon L.J."/>
            <person name="Gill J.E."/>
            <person name="Adams M.D."/>
            <person name="Carrera A.J."/>
            <person name="Creasy T.H."/>
            <person name="Goodman H.M."/>
            <person name="Somerville C.R."/>
            <person name="Copenhaver G.P."/>
            <person name="Preuss D."/>
            <person name="Nierman W.C."/>
            <person name="White O."/>
            <person name="Eisen J.A."/>
            <person name="Salzberg S.L."/>
            <person name="Fraser C.M."/>
            <person name="Venter J.C."/>
        </authorList>
    </citation>
    <scope>NUCLEOTIDE SEQUENCE [LARGE SCALE GENOMIC DNA]</scope>
    <source>
        <strain>cv. Columbia</strain>
    </source>
</reference>
<reference key="3">
    <citation type="journal article" date="2017" name="Plant J.">
        <title>Araport11: a complete reannotation of the Arabidopsis thaliana reference genome.</title>
        <authorList>
            <person name="Cheng C.Y."/>
            <person name="Krishnakumar V."/>
            <person name="Chan A.P."/>
            <person name="Thibaud-Nissen F."/>
            <person name="Schobel S."/>
            <person name="Town C.D."/>
        </authorList>
    </citation>
    <scope>GENOME REANNOTATION</scope>
    <source>
        <strain>cv. Columbia</strain>
    </source>
</reference>
<reference key="4">
    <citation type="journal article" date="2003" name="Science">
        <title>Empirical analysis of transcriptional activity in the Arabidopsis genome.</title>
        <authorList>
            <person name="Yamada K."/>
            <person name="Lim J."/>
            <person name="Dale J.M."/>
            <person name="Chen H."/>
            <person name="Shinn P."/>
            <person name="Palm C.J."/>
            <person name="Southwick A.M."/>
            <person name="Wu H.C."/>
            <person name="Kim C.J."/>
            <person name="Nguyen M."/>
            <person name="Pham P.K."/>
            <person name="Cheuk R.F."/>
            <person name="Karlin-Newmann G."/>
            <person name="Liu S.X."/>
            <person name="Lam B."/>
            <person name="Sakano H."/>
            <person name="Wu T."/>
            <person name="Yu G."/>
            <person name="Miranda M."/>
            <person name="Quach H.L."/>
            <person name="Tripp M."/>
            <person name="Chang C.H."/>
            <person name="Lee J.M."/>
            <person name="Toriumi M.J."/>
            <person name="Chan M.M."/>
            <person name="Tang C.C."/>
            <person name="Onodera C.S."/>
            <person name="Deng J.M."/>
            <person name="Akiyama K."/>
            <person name="Ansari Y."/>
            <person name="Arakawa T."/>
            <person name="Banh J."/>
            <person name="Banno F."/>
            <person name="Bowser L."/>
            <person name="Brooks S.Y."/>
            <person name="Carninci P."/>
            <person name="Chao Q."/>
            <person name="Choy N."/>
            <person name="Enju A."/>
            <person name="Goldsmith A.D."/>
            <person name="Gurjal M."/>
            <person name="Hansen N.F."/>
            <person name="Hayashizaki Y."/>
            <person name="Johnson-Hopson C."/>
            <person name="Hsuan V.W."/>
            <person name="Iida K."/>
            <person name="Karnes M."/>
            <person name="Khan S."/>
            <person name="Koesema E."/>
            <person name="Ishida J."/>
            <person name="Jiang P.X."/>
            <person name="Jones T."/>
            <person name="Kawai J."/>
            <person name="Kamiya A."/>
            <person name="Meyers C."/>
            <person name="Nakajima M."/>
            <person name="Narusaka M."/>
            <person name="Seki M."/>
            <person name="Sakurai T."/>
            <person name="Satou M."/>
            <person name="Tamse R."/>
            <person name="Vaysberg M."/>
            <person name="Wallender E.K."/>
            <person name="Wong C."/>
            <person name="Yamamura Y."/>
            <person name="Yuan S."/>
            <person name="Shinozaki K."/>
            <person name="Davis R.W."/>
            <person name="Theologis A."/>
            <person name="Ecker J.R."/>
        </authorList>
    </citation>
    <scope>NUCLEOTIDE SEQUENCE [LARGE SCALE MRNA]</scope>
    <source>
        <strain>cv. Columbia</strain>
    </source>
</reference>
<reference key="5">
    <citation type="submission" date="2006-07" db="EMBL/GenBank/DDBJ databases">
        <title>Large-scale analysis of RIKEN Arabidopsis full-length (RAFL) cDNAs.</title>
        <authorList>
            <person name="Totoki Y."/>
            <person name="Seki M."/>
            <person name="Ishida J."/>
            <person name="Nakajima M."/>
            <person name="Enju A."/>
            <person name="Kamiya A."/>
            <person name="Narusaka M."/>
            <person name="Shin-i T."/>
            <person name="Nakagawa M."/>
            <person name="Sakamoto N."/>
            <person name="Oishi K."/>
            <person name="Kohara Y."/>
            <person name="Kobayashi M."/>
            <person name="Toyoda A."/>
            <person name="Sakaki Y."/>
            <person name="Sakurai T."/>
            <person name="Iida K."/>
            <person name="Akiyama K."/>
            <person name="Satou M."/>
            <person name="Toyoda T."/>
            <person name="Konagaya A."/>
            <person name="Carninci P."/>
            <person name="Kawai J."/>
            <person name="Hayashizaki Y."/>
            <person name="Shinozaki K."/>
        </authorList>
    </citation>
    <scope>NUCLEOTIDE SEQUENCE [LARGE SCALE MRNA]</scope>
    <source>
        <strain>cv. Columbia</strain>
    </source>
</reference>
<reference key="6">
    <citation type="journal article" date="2000" name="J. Exp. Bot.">
        <title>Regulation of Arabidopsis root development by nitrate availability.</title>
        <authorList>
            <person name="Zhang H."/>
            <person name="Forde B.G."/>
        </authorList>
    </citation>
    <scope>REVIEW</scope>
</reference>
<reference key="7">
    <citation type="journal article" date="2003" name="Plant Cell">
        <title>Molecular and phylogenetic analyses of the complete MADS-box transcription factor family in Arabidopsis: new openings to the MADS world.</title>
        <authorList>
            <person name="Parenicova L."/>
            <person name="de Folter S."/>
            <person name="Kieffer M."/>
            <person name="Horner D.S."/>
            <person name="Favalli C."/>
            <person name="Busscher J."/>
            <person name="Cook H.E."/>
            <person name="Ingram R.M."/>
            <person name="Kater M.M."/>
            <person name="Davies B."/>
            <person name="Angenent G.C."/>
            <person name="Colombo L."/>
        </authorList>
    </citation>
    <scope>TISSUE SPECIFICITY</scope>
    <scope>GENE FAMILY</scope>
    <scope>NOMENCLATURE</scope>
</reference>
<reference key="8">
    <citation type="journal article" date="2005" name="Biochem. Soc. Trans.">
        <title>Nitrate and glutamate sensing by plant roots.</title>
        <authorList>
            <person name="Filleur S."/>
            <person name="Walch-Liu P."/>
            <person name="Gan Y."/>
            <person name="Forde B.G."/>
        </authorList>
    </citation>
    <scope>FUNCTION</scope>
</reference>
<reference key="9">
    <citation type="journal article" date="2005" name="Planta">
        <title>Nutritional regulation of ANR1 and other root-expressed MADS-box genes in Arabidopsis thaliana.</title>
        <authorList>
            <person name="Gan Y."/>
            <person name="Filleur S."/>
            <person name="Rahman A."/>
            <person name="Gotensparre S."/>
            <person name="Forde B.G."/>
        </authorList>
    </citation>
    <scope>INDUCTION BY NITROGEN DEPRIVATION</scope>
    <scope>TISSUE SPECIFICITY</scope>
    <scope>DISRUPTION PHENOTYPE</scope>
    <source>
        <strain>cv. Columbia</strain>
    </source>
</reference>
<reference key="10">
    <citation type="journal article" date="2005" name="Plant Cell">
        <title>Comprehensive interaction map of the Arabidopsis MADS Box transcription factors.</title>
        <authorList>
            <person name="de Folter S."/>
            <person name="Immink R.G.H."/>
            <person name="Kieffer M."/>
            <person name="Parenicova L."/>
            <person name="Henz S.R."/>
            <person name="Weigel D."/>
            <person name="Busscher M."/>
            <person name="Kooiker M."/>
            <person name="Colombo L."/>
            <person name="Kater M.M."/>
            <person name="Davies B."/>
            <person name="Angenent G.C."/>
        </authorList>
    </citation>
    <scope>INTERACTION WITH AGL16; AGL21 AND SOC1</scope>
</reference>
<reference key="11">
    <citation type="journal article" date="2006" name="Ann. Bot.">
        <title>Nitrogen regulation of root branching.</title>
        <authorList>
            <person name="Walch-Liu P."/>
            <person name="Ivanov I.I."/>
            <person name="Filleur S."/>
            <person name="Gan Y."/>
            <person name="Remans T."/>
            <person name="Forde B.G."/>
        </authorList>
    </citation>
    <scope>REVIEW</scope>
</reference>
<reference key="12">
    <citation type="journal article" date="2006" name="Proc. Natl. Acad. Sci. U.S.A.">
        <title>The Arabidopsis NRT1.1 transporter participates in the signaling pathway triggering root colonization of nitrate-rich patches.</title>
        <authorList>
            <person name="Remans T."/>
            <person name="Nacry P."/>
            <person name="Pervent M."/>
            <person name="Filleur S."/>
            <person name="Diatloff E."/>
            <person name="Mounier E."/>
            <person name="Tillard P."/>
            <person name="Forde B.G."/>
            <person name="Gojon A."/>
        </authorList>
    </citation>
    <scope>FUNCTION</scope>
    <scope>TISSUE SPECIFICITY</scope>
    <scope>INDUCTION BY NITRATE</scope>
</reference>
<reference key="13">
    <citation type="journal article" date="2007" name="J. Exp. Bot.">
        <title>Signalling mechanisms underlying the morphological responses of the root system to nitrogen in Arabidopsis thaliana.</title>
        <authorList>
            <person name="Zhang H."/>
            <person name="Rong H."/>
            <person name="Pilbeam D."/>
        </authorList>
    </citation>
    <scope>REVIEW</scope>
</reference>
<evidence type="ECO:0000255" key="1">
    <source>
        <dbReference type="PROSITE-ProRule" id="PRU00251"/>
    </source>
</evidence>
<evidence type="ECO:0000255" key="2">
    <source>
        <dbReference type="PROSITE-ProRule" id="PRU00629"/>
    </source>
</evidence>
<evidence type="ECO:0000269" key="3">
    <source>
    </source>
</evidence>
<evidence type="ECO:0000269" key="4">
    <source>
    </source>
</evidence>
<evidence type="ECO:0000269" key="5">
    <source>
    </source>
</evidence>
<evidence type="ECO:0000269" key="6">
    <source>
    </source>
</evidence>
<evidence type="ECO:0000269" key="7">
    <source>
    </source>
</evidence>
<evidence type="ECO:0000269" key="8">
    <source>
    </source>
</evidence>
<evidence type="ECO:0000305" key="9"/>
<organism>
    <name type="scientific">Arabidopsis thaliana</name>
    <name type="common">Mouse-ear cress</name>
    <dbReference type="NCBI Taxonomy" id="3702"/>
    <lineage>
        <taxon>Eukaryota</taxon>
        <taxon>Viridiplantae</taxon>
        <taxon>Streptophyta</taxon>
        <taxon>Embryophyta</taxon>
        <taxon>Tracheophyta</taxon>
        <taxon>Spermatophyta</taxon>
        <taxon>Magnoliopsida</taxon>
        <taxon>eudicotyledons</taxon>
        <taxon>Gunneridae</taxon>
        <taxon>Pentapetalae</taxon>
        <taxon>rosids</taxon>
        <taxon>malvids</taxon>
        <taxon>Brassicales</taxon>
        <taxon>Brassicaceae</taxon>
        <taxon>Camelineae</taxon>
        <taxon>Arabidopsis</taxon>
    </lineage>
</organism>
<dbReference type="EMBL" id="Z97057">
    <property type="protein sequence ID" value="CAB09793.1"/>
    <property type="molecule type" value="mRNA"/>
</dbReference>
<dbReference type="EMBL" id="AC007210">
    <property type="protein sequence ID" value="AAD25638.1"/>
    <property type="molecule type" value="Genomic_DNA"/>
</dbReference>
<dbReference type="EMBL" id="CP002685">
    <property type="protein sequence ID" value="AEC06290.1"/>
    <property type="molecule type" value="Genomic_DNA"/>
</dbReference>
<dbReference type="EMBL" id="BT005861">
    <property type="protein sequence ID" value="AAO64796.1"/>
    <property type="molecule type" value="mRNA"/>
</dbReference>
<dbReference type="EMBL" id="AK228244">
    <property type="protein sequence ID" value="BAF00192.1"/>
    <property type="molecule type" value="mRNA"/>
</dbReference>
<dbReference type="PIR" id="A84515">
    <property type="entry name" value="A84515"/>
</dbReference>
<dbReference type="PIR" id="T52100">
    <property type="entry name" value="T52100"/>
</dbReference>
<dbReference type="RefSeq" id="NP_179033.1">
    <property type="nucleotide sequence ID" value="NM_126990.3"/>
</dbReference>
<dbReference type="SMR" id="Q9SI38"/>
<dbReference type="BioGRID" id="1267">
    <property type="interactions" value="8"/>
</dbReference>
<dbReference type="FunCoup" id="Q9SI38">
    <property type="interactions" value="2"/>
</dbReference>
<dbReference type="IntAct" id="Q9SI38">
    <property type="interactions" value="8"/>
</dbReference>
<dbReference type="STRING" id="3702.Q9SI38"/>
<dbReference type="PaxDb" id="3702-AT2G14210.1"/>
<dbReference type="EnsemblPlants" id="AT2G14210.1">
    <property type="protein sequence ID" value="AT2G14210.1"/>
    <property type="gene ID" value="AT2G14210"/>
</dbReference>
<dbReference type="GeneID" id="815907"/>
<dbReference type="Gramene" id="AT2G14210.1">
    <property type="protein sequence ID" value="AT2G14210.1"/>
    <property type="gene ID" value="AT2G14210"/>
</dbReference>
<dbReference type="KEGG" id="ath:AT2G14210"/>
<dbReference type="Araport" id="AT2G14210"/>
<dbReference type="TAIR" id="AT2G14210">
    <property type="gene designation" value="AGL44"/>
</dbReference>
<dbReference type="eggNOG" id="KOG0014">
    <property type="taxonomic scope" value="Eukaryota"/>
</dbReference>
<dbReference type="HOGENOM" id="CLU_053053_2_0_1"/>
<dbReference type="InParanoid" id="Q9SI38"/>
<dbReference type="OMA" id="SNGFNHE"/>
<dbReference type="PhylomeDB" id="Q9SI38"/>
<dbReference type="PRO" id="PR:Q9SI38"/>
<dbReference type="Proteomes" id="UP000006548">
    <property type="component" value="Chromosome 2"/>
</dbReference>
<dbReference type="ExpressionAtlas" id="Q9SI38">
    <property type="expression patterns" value="baseline and differential"/>
</dbReference>
<dbReference type="GO" id="GO:0005634">
    <property type="term" value="C:nucleus"/>
    <property type="evidence" value="ECO:0007669"/>
    <property type="project" value="UniProtKB-SubCell"/>
</dbReference>
<dbReference type="GO" id="GO:0003700">
    <property type="term" value="F:DNA-binding transcription factor activity"/>
    <property type="evidence" value="ECO:0000250"/>
    <property type="project" value="TAIR"/>
</dbReference>
<dbReference type="GO" id="GO:0046983">
    <property type="term" value="F:protein dimerization activity"/>
    <property type="evidence" value="ECO:0007669"/>
    <property type="project" value="InterPro"/>
</dbReference>
<dbReference type="GO" id="GO:0000977">
    <property type="term" value="F:RNA polymerase II transcription regulatory region sequence-specific DNA binding"/>
    <property type="evidence" value="ECO:0007669"/>
    <property type="project" value="InterPro"/>
</dbReference>
<dbReference type="GO" id="GO:0000976">
    <property type="term" value="F:transcription cis-regulatory region binding"/>
    <property type="evidence" value="ECO:0000353"/>
    <property type="project" value="TAIR"/>
</dbReference>
<dbReference type="GO" id="GO:0071249">
    <property type="term" value="P:cellular response to nitrate"/>
    <property type="evidence" value="ECO:0000270"/>
    <property type="project" value="UniProtKB"/>
</dbReference>
<dbReference type="GO" id="GO:0048527">
    <property type="term" value="P:lateral root development"/>
    <property type="evidence" value="ECO:0000315"/>
    <property type="project" value="UniProtKB"/>
</dbReference>
<dbReference type="GO" id="GO:0045944">
    <property type="term" value="P:positive regulation of transcription by RNA polymerase II"/>
    <property type="evidence" value="ECO:0007669"/>
    <property type="project" value="InterPro"/>
</dbReference>
<dbReference type="GO" id="GO:0010167">
    <property type="term" value="P:response to nitrate"/>
    <property type="evidence" value="ECO:0000315"/>
    <property type="project" value="UniProtKB"/>
</dbReference>
<dbReference type="GO" id="GO:0007584">
    <property type="term" value="P:response to nutrient"/>
    <property type="evidence" value="ECO:0000315"/>
    <property type="project" value="TAIR"/>
</dbReference>
<dbReference type="CDD" id="cd00265">
    <property type="entry name" value="MADS_MEF2_like"/>
    <property type="match status" value="1"/>
</dbReference>
<dbReference type="FunFam" id="3.40.1810.10:FF:000021">
    <property type="entry name" value="AGAMOUS-like 21"/>
    <property type="match status" value="1"/>
</dbReference>
<dbReference type="Gene3D" id="3.40.1810.10">
    <property type="entry name" value="Transcription factor, MADS-box"/>
    <property type="match status" value="1"/>
</dbReference>
<dbReference type="InterPro" id="IPR050142">
    <property type="entry name" value="MADS-box/MEF2_TF"/>
</dbReference>
<dbReference type="InterPro" id="IPR033896">
    <property type="entry name" value="MEF2-like_N"/>
</dbReference>
<dbReference type="InterPro" id="IPR002487">
    <property type="entry name" value="TF_Kbox"/>
</dbReference>
<dbReference type="InterPro" id="IPR002100">
    <property type="entry name" value="TF_MADSbox"/>
</dbReference>
<dbReference type="InterPro" id="IPR036879">
    <property type="entry name" value="TF_MADSbox_sf"/>
</dbReference>
<dbReference type="PANTHER" id="PTHR48019">
    <property type="entry name" value="SERUM RESPONSE FACTOR HOMOLOG"/>
    <property type="match status" value="1"/>
</dbReference>
<dbReference type="Pfam" id="PF01486">
    <property type="entry name" value="K-box"/>
    <property type="match status" value="1"/>
</dbReference>
<dbReference type="Pfam" id="PF00319">
    <property type="entry name" value="SRF-TF"/>
    <property type="match status" value="1"/>
</dbReference>
<dbReference type="PRINTS" id="PR00404">
    <property type="entry name" value="MADSDOMAIN"/>
</dbReference>
<dbReference type="SMART" id="SM00432">
    <property type="entry name" value="MADS"/>
    <property type="match status" value="1"/>
</dbReference>
<dbReference type="SUPFAM" id="SSF55455">
    <property type="entry name" value="SRF-like"/>
    <property type="match status" value="1"/>
</dbReference>
<dbReference type="PROSITE" id="PS51297">
    <property type="entry name" value="K_BOX"/>
    <property type="match status" value="1"/>
</dbReference>
<dbReference type="PROSITE" id="PS00350">
    <property type="entry name" value="MADS_BOX_1"/>
    <property type="match status" value="1"/>
</dbReference>
<dbReference type="PROSITE" id="PS50066">
    <property type="entry name" value="MADS_BOX_2"/>
    <property type="match status" value="1"/>
</dbReference>
<comment type="function">
    <text evidence="4 7 8">Probable transcription factor. Required for root plasticity in response to nitrate, NO(3)(-). Promotes lateral root growth in a NRT1.1-dependent manner.</text>
</comment>
<comment type="subunit">
    <text evidence="5">Interacts with AGL16, AGL21 and SOC1.</text>
</comment>
<comment type="interaction">
    <interactant intactId="EBI-622096">
        <id>Q9SI38</id>
    </interactant>
    <interactant intactId="EBI-621986">
        <id>Q9SZJ6</id>
        <label>AGL21</label>
    </interactant>
    <organismsDiffer>false</organismsDiffer>
    <experiments>4</experiments>
</comment>
<comment type="interaction">
    <interactant intactId="EBI-622096">
        <id>Q9SI38</id>
    </interactant>
    <interactant intactId="EBI-15191535">
        <id>O80748</id>
        <label>BBX26</label>
    </interactant>
    <organismsDiffer>false</organismsDiffer>
    <experiments>3</experiments>
</comment>
<comment type="interaction">
    <interactant intactId="EBI-622096">
        <id>Q9SI38</id>
    </interactant>
    <interactant intactId="EBI-1640543">
        <id>Q0V7X4</id>
        <label>FIT</label>
    </interactant>
    <organismsDiffer>false</organismsDiffer>
    <experiments>3</experiments>
</comment>
<comment type="subcellular location">
    <subcellularLocation>
        <location evidence="9">Nucleus</location>
    </subcellularLocation>
</comment>
<comment type="tissue specificity">
    <text evidence="3 6 7 8">Specifically expressed in roots, mostly in lateral roots (LR) primordia, young emerging LRs, apex and base of LRs, apex of the primary root, and in the stele. Barely detectable in shoots.</text>
</comment>
<comment type="induction">
    <text evidence="6 7 8">Induced by nitrate in root cell culture, (PubMed:17148611, PubMed:9430595). In roots, seems induced by nitrogen (N) deprivation (e.g. nitrate free medium) but rapidly repressed by N re-supply (e.g. nitrate, glutamine and ammonium) (PubMed:16021502). Slight repression in shoots during nitrogen (N) deprivation.</text>
</comment>
<comment type="disruption phenotype">
    <text evidence="6 8">Impaired lateral root proliferation in nitrate rich root zones.</text>
</comment>